<proteinExistence type="inferred from homology"/>
<sequence>MKLNELRDNEGARYQSKRLGRGIGSGKGKTSGKGVKGQTSRTGVAINGFEGGQMPIYRRLPKRGFHNPNAKHFAVINLGRLQKAIDEKRIDAKATITAEILSAAGLIGKVLDGVRLLGHGEIKAKVSIEVTGASAAAIAAVEKAGGSVTVAAPKAVAEG</sequence>
<accession>Q2W2K9</accession>
<name>RL15_PARM1</name>
<organism>
    <name type="scientific">Paramagnetospirillum magneticum (strain ATCC 700264 / AMB-1)</name>
    <name type="common">Magnetospirillum magneticum</name>
    <dbReference type="NCBI Taxonomy" id="342108"/>
    <lineage>
        <taxon>Bacteria</taxon>
        <taxon>Pseudomonadati</taxon>
        <taxon>Pseudomonadota</taxon>
        <taxon>Alphaproteobacteria</taxon>
        <taxon>Rhodospirillales</taxon>
        <taxon>Magnetospirillaceae</taxon>
        <taxon>Paramagnetospirillum</taxon>
    </lineage>
</organism>
<feature type="chain" id="PRO_0000251526" description="Large ribosomal subunit protein uL15">
    <location>
        <begin position="1"/>
        <end position="159"/>
    </location>
</feature>
<feature type="region of interest" description="Disordered" evidence="2">
    <location>
        <begin position="1"/>
        <end position="40"/>
    </location>
</feature>
<feature type="compositionally biased region" description="Basic and acidic residues" evidence="2">
    <location>
        <begin position="1"/>
        <end position="11"/>
    </location>
</feature>
<feature type="compositionally biased region" description="Gly residues" evidence="2">
    <location>
        <begin position="21"/>
        <end position="35"/>
    </location>
</feature>
<comment type="function">
    <text evidence="1">Binds to the 23S rRNA.</text>
</comment>
<comment type="subunit">
    <text evidence="1">Part of the 50S ribosomal subunit.</text>
</comment>
<comment type="similarity">
    <text evidence="1">Belongs to the universal ribosomal protein uL15 family.</text>
</comment>
<keyword id="KW-0687">Ribonucleoprotein</keyword>
<keyword id="KW-0689">Ribosomal protein</keyword>
<keyword id="KW-0694">RNA-binding</keyword>
<keyword id="KW-0699">rRNA-binding</keyword>
<dbReference type="EMBL" id="AP007255">
    <property type="protein sequence ID" value="BAE51916.1"/>
    <property type="molecule type" value="Genomic_DNA"/>
</dbReference>
<dbReference type="RefSeq" id="WP_011385487.1">
    <property type="nucleotide sequence ID" value="NC_007626.1"/>
</dbReference>
<dbReference type="SMR" id="Q2W2K9"/>
<dbReference type="STRING" id="342108.amb3112"/>
<dbReference type="KEGG" id="mag:amb3112"/>
<dbReference type="HOGENOM" id="CLU_055188_4_0_5"/>
<dbReference type="OrthoDB" id="9810293at2"/>
<dbReference type="Proteomes" id="UP000007058">
    <property type="component" value="Chromosome"/>
</dbReference>
<dbReference type="GO" id="GO:0022625">
    <property type="term" value="C:cytosolic large ribosomal subunit"/>
    <property type="evidence" value="ECO:0007669"/>
    <property type="project" value="TreeGrafter"/>
</dbReference>
<dbReference type="GO" id="GO:0019843">
    <property type="term" value="F:rRNA binding"/>
    <property type="evidence" value="ECO:0007669"/>
    <property type="project" value="UniProtKB-UniRule"/>
</dbReference>
<dbReference type="GO" id="GO:0003735">
    <property type="term" value="F:structural constituent of ribosome"/>
    <property type="evidence" value="ECO:0007669"/>
    <property type="project" value="InterPro"/>
</dbReference>
<dbReference type="GO" id="GO:0006412">
    <property type="term" value="P:translation"/>
    <property type="evidence" value="ECO:0007669"/>
    <property type="project" value="UniProtKB-UniRule"/>
</dbReference>
<dbReference type="Gene3D" id="3.100.10.10">
    <property type="match status" value="1"/>
</dbReference>
<dbReference type="HAMAP" id="MF_01341">
    <property type="entry name" value="Ribosomal_uL15"/>
    <property type="match status" value="1"/>
</dbReference>
<dbReference type="InterPro" id="IPR030878">
    <property type="entry name" value="Ribosomal_uL15"/>
</dbReference>
<dbReference type="InterPro" id="IPR021131">
    <property type="entry name" value="Ribosomal_uL15/eL18"/>
</dbReference>
<dbReference type="InterPro" id="IPR036227">
    <property type="entry name" value="Ribosomal_uL15/eL18_sf"/>
</dbReference>
<dbReference type="InterPro" id="IPR005749">
    <property type="entry name" value="Ribosomal_uL15_bac-type"/>
</dbReference>
<dbReference type="InterPro" id="IPR001196">
    <property type="entry name" value="Ribosomal_uL15_CS"/>
</dbReference>
<dbReference type="NCBIfam" id="TIGR01071">
    <property type="entry name" value="rplO_bact"/>
    <property type="match status" value="1"/>
</dbReference>
<dbReference type="PANTHER" id="PTHR12934">
    <property type="entry name" value="50S RIBOSOMAL PROTEIN L15"/>
    <property type="match status" value="1"/>
</dbReference>
<dbReference type="PANTHER" id="PTHR12934:SF11">
    <property type="entry name" value="LARGE RIBOSOMAL SUBUNIT PROTEIN UL15M"/>
    <property type="match status" value="1"/>
</dbReference>
<dbReference type="Pfam" id="PF00828">
    <property type="entry name" value="Ribosomal_L27A"/>
    <property type="match status" value="1"/>
</dbReference>
<dbReference type="SUPFAM" id="SSF52080">
    <property type="entry name" value="Ribosomal proteins L15p and L18e"/>
    <property type="match status" value="1"/>
</dbReference>
<dbReference type="PROSITE" id="PS00475">
    <property type="entry name" value="RIBOSOMAL_L15"/>
    <property type="match status" value="1"/>
</dbReference>
<evidence type="ECO:0000255" key="1">
    <source>
        <dbReference type="HAMAP-Rule" id="MF_01341"/>
    </source>
</evidence>
<evidence type="ECO:0000256" key="2">
    <source>
        <dbReference type="SAM" id="MobiDB-lite"/>
    </source>
</evidence>
<evidence type="ECO:0000305" key="3"/>
<reference key="1">
    <citation type="journal article" date="2005" name="DNA Res.">
        <title>Complete genome sequence of the facultative anaerobic magnetotactic bacterium Magnetospirillum sp. strain AMB-1.</title>
        <authorList>
            <person name="Matsunaga T."/>
            <person name="Okamura Y."/>
            <person name="Fukuda Y."/>
            <person name="Wahyudi A.T."/>
            <person name="Murase Y."/>
            <person name="Takeyama H."/>
        </authorList>
    </citation>
    <scope>NUCLEOTIDE SEQUENCE [LARGE SCALE GENOMIC DNA]</scope>
    <source>
        <strain>ATCC 700264 / AMB-1</strain>
    </source>
</reference>
<gene>
    <name evidence="1" type="primary">rplO</name>
    <name type="ordered locus">amb3112</name>
</gene>
<protein>
    <recommendedName>
        <fullName evidence="1">Large ribosomal subunit protein uL15</fullName>
    </recommendedName>
    <alternativeName>
        <fullName evidence="3">50S ribosomal protein L15</fullName>
    </alternativeName>
</protein>